<organism>
    <name type="scientific">Ostreid herpesvirus 1 (isolate France)</name>
    <name type="common">OsHV-1</name>
    <name type="synonym">Pacific oyster herpesvirus</name>
    <dbReference type="NCBI Taxonomy" id="654903"/>
    <lineage>
        <taxon>Viruses</taxon>
        <taxon>Duplodnaviria</taxon>
        <taxon>Heunggongvirae</taxon>
        <taxon>Peploviricota</taxon>
        <taxon>Herviviricetes</taxon>
        <taxon>Herpesvirales</taxon>
        <taxon>Malacoherpesviridae</taxon>
        <taxon>Ostreavirus</taxon>
        <taxon>Ostreavirus ostreidmalaco1</taxon>
        <taxon>Ostreid herpesvirus 1</taxon>
    </lineage>
</organism>
<accession>Q6R7D0</accession>
<reference key="1">
    <citation type="journal article" date="2005" name="J. Gen. Virol.">
        <title>A novel class of herpesvirus with bivalve hosts.</title>
        <authorList>
            <person name="Davison A.J."/>
            <person name="Trus B.L."/>
            <person name="Cheng N."/>
            <person name="Steven A.C."/>
            <person name="Watson M.S."/>
            <person name="Cunningham C."/>
            <person name="Le Deuff R.M."/>
            <person name="Renault T."/>
        </authorList>
    </citation>
    <scope>NUCLEOTIDE SEQUENCE [LARGE SCALE GENOMIC DNA]</scope>
</reference>
<sequence length="250" mass="26591">MLSVPEMILYEDRVNSFGGWSKQLRPNKDTLAPAGFFYTGMGDKVKCFACGLEVIDWDPTDNPWTEHGKFSGDCLYLKMTGAIVKSKDATTTNPSTSNPFTGANNQQAVIPLTAPPPLFQQPPPPTTTSAPAVDVAPAPPTFGFNTTSTSKTTNYAFPARATAPPPITSVPKPMFGNGFVFNSSPNKQTALFGKPPGNGQDVCGNMPSTTNNSNKQQGVFGINMTGGTNQQQPTSGMFGVKPVVAQPFKF</sequence>
<feature type="chain" id="PRO_0000385027" description="Putative apoptosis inhibitor ORF99">
    <location>
        <begin position="1"/>
        <end position="250"/>
    </location>
</feature>
<feature type="repeat" description="BIR">
    <location>
        <begin position="13"/>
        <end position="78"/>
    </location>
</feature>
<proteinExistence type="predicted"/>
<organismHost>
    <name type="scientific">Magallana gigas</name>
    <name type="common">Pacific oyster</name>
    <name type="synonym">Crassostrea gigas</name>
    <dbReference type="NCBI Taxonomy" id="29159"/>
</organismHost>
<organismHost>
    <name type="scientific">Pecten maximus</name>
    <name type="common">King scallop</name>
    <name type="synonym">Pilgrim's clam</name>
    <dbReference type="NCBI Taxonomy" id="6579"/>
</organismHost>
<keyword id="KW-1185">Reference proteome</keyword>
<comment type="function">
    <text>May act as an apoptosis inhibitor.</text>
</comment>
<dbReference type="EMBL" id="AY509253">
    <property type="protein sequence ID" value="AAS00985.1"/>
    <property type="molecule type" value="Genomic_DNA"/>
</dbReference>
<dbReference type="RefSeq" id="YP_024638.1">
    <property type="nucleotide sequence ID" value="NC_005881.2"/>
</dbReference>
<dbReference type="SMR" id="Q6R7D0"/>
<dbReference type="KEGG" id="vg:2948148"/>
<dbReference type="Proteomes" id="UP000007021">
    <property type="component" value="Segment"/>
</dbReference>
<dbReference type="GO" id="GO:0051726">
    <property type="term" value="P:regulation of cell cycle"/>
    <property type="evidence" value="ECO:0007669"/>
    <property type="project" value="TreeGrafter"/>
</dbReference>
<dbReference type="CDD" id="cd00022">
    <property type="entry name" value="BIR"/>
    <property type="match status" value="1"/>
</dbReference>
<dbReference type="Gene3D" id="1.10.1170.10">
    <property type="entry name" value="Inhibitor Of Apoptosis Protein (2mihbC-IAP-1), Chain A"/>
    <property type="match status" value="1"/>
</dbReference>
<dbReference type="InterPro" id="IPR001370">
    <property type="entry name" value="BIR_rpt"/>
</dbReference>
<dbReference type="InterPro" id="IPR050784">
    <property type="entry name" value="IAP"/>
</dbReference>
<dbReference type="PANTHER" id="PTHR10044:SF139">
    <property type="entry name" value="DEATH-ASSOCIATED INHIBITOR OF APOPTOSIS 2"/>
    <property type="match status" value="1"/>
</dbReference>
<dbReference type="PANTHER" id="PTHR10044">
    <property type="entry name" value="INHIBITOR OF APOPTOSIS"/>
    <property type="match status" value="1"/>
</dbReference>
<dbReference type="Pfam" id="PF00653">
    <property type="entry name" value="BIR"/>
    <property type="match status" value="1"/>
</dbReference>
<dbReference type="SMART" id="SM00238">
    <property type="entry name" value="BIR"/>
    <property type="match status" value="1"/>
</dbReference>
<dbReference type="SUPFAM" id="SSF57924">
    <property type="entry name" value="Inhibitor of apoptosis (IAP) repeat"/>
    <property type="match status" value="1"/>
</dbReference>
<dbReference type="PROSITE" id="PS50143">
    <property type="entry name" value="BIR_REPEAT_2"/>
    <property type="match status" value="1"/>
</dbReference>
<protein>
    <recommendedName>
        <fullName>Putative apoptosis inhibitor ORF99</fullName>
    </recommendedName>
</protein>
<name>IAP3_OSHVF</name>
<gene>
    <name type="ORF">ORF99</name>
</gene>